<name>SELA_CLOP1</name>
<feature type="chain" id="PRO_1000050360" description="L-seryl-tRNA(Sec) selenium transferase">
    <location>
        <begin position="1"/>
        <end position="462"/>
    </location>
</feature>
<feature type="modified residue" description="N6-(pyridoxal phosphate)lysine" evidence="1">
    <location>
        <position position="292"/>
    </location>
</feature>
<sequence length="462" mass="51913">MTKELLRALPKIDEILGIFNEDFLNENGRETVVSALRDIINENRKAILNEEVDYALTKEEAKSKCEHRLLKKRERNLKRVINGTGVVIHTNLGRSLLSKEATEAVALAASSYSNLEYDLEKGERGSRYSLIEGIIKDITGAEAALVVNNNAAAIMLVLNSLCENKEVIVSRGELVEIGGSFRIPEVMNFSRAKLVEVGTTNRTHLYDYEDAITEETGAFLKVHSSNFKIVGFTKSVSANEICNLAREKDIPVIEDIGSGVLIDLSKYGLEKEPTVIESLEDGVDVVTFSGDKMLGGAQAGIIVGKKKFIDKIKRNQLTRALRVDKFTLAALEITLKHYLNEKEAIEKIPTLHMMTLDLKEIKERANRLYKNLERLNKFYKFSIEEGESTVGGGSMPDSKLSTYLLRIDSDSINEVNLERELREYKIPIITRVYKGAVYIDLRTILEDDYEVIFNALKEIGEK</sequence>
<evidence type="ECO:0000255" key="1">
    <source>
        <dbReference type="HAMAP-Rule" id="MF_00423"/>
    </source>
</evidence>
<proteinExistence type="inferred from homology"/>
<comment type="function">
    <text evidence="1">Converts seryl-tRNA(Sec) to selenocysteinyl-tRNA(Sec) required for selenoprotein biosynthesis.</text>
</comment>
<comment type="catalytic activity">
    <reaction evidence="1">
        <text>L-seryl-tRNA(Sec) + selenophosphate + H(+) = L-selenocysteinyl-tRNA(Sec) + phosphate</text>
        <dbReference type="Rhea" id="RHEA:22728"/>
        <dbReference type="Rhea" id="RHEA-COMP:9742"/>
        <dbReference type="Rhea" id="RHEA-COMP:9743"/>
        <dbReference type="ChEBI" id="CHEBI:15378"/>
        <dbReference type="ChEBI" id="CHEBI:16144"/>
        <dbReference type="ChEBI" id="CHEBI:43474"/>
        <dbReference type="ChEBI" id="CHEBI:78533"/>
        <dbReference type="ChEBI" id="CHEBI:78573"/>
        <dbReference type="EC" id="2.9.1.1"/>
    </reaction>
</comment>
<comment type="cofactor">
    <cofactor evidence="1">
        <name>pyridoxal 5'-phosphate</name>
        <dbReference type="ChEBI" id="CHEBI:597326"/>
    </cofactor>
</comment>
<comment type="pathway">
    <text evidence="1">Aminoacyl-tRNA biosynthesis; selenocysteinyl-tRNA(Sec) biosynthesis; selenocysteinyl-tRNA(Sec) from L-seryl-tRNA(Sec) (bacterial route): step 1/1.</text>
</comment>
<comment type="subcellular location">
    <subcellularLocation>
        <location evidence="1">Cytoplasm</location>
    </subcellularLocation>
</comment>
<comment type="similarity">
    <text evidence="1">Belongs to the SelA family.</text>
</comment>
<keyword id="KW-0963">Cytoplasm</keyword>
<keyword id="KW-0648">Protein biosynthesis</keyword>
<keyword id="KW-0663">Pyridoxal phosphate</keyword>
<keyword id="KW-0711">Selenium</keyword>
<keyword id="KW-0808">Transferase</keyword>
<accession>Q0TNJ4</accession>
<reference key="1">
    <citation type="journal article" date="2006" name="Genome Res.">
        <title>Skewed genomic variability in strains of the toxigenic bacterial pathogen, Clostridium perfringens.</title>
        <authorList>
            <person name="Myers G.S.A."/>
            <person name="Rasko D.A."/>
            <person name="Cheung J.K."/>
            <person name="Ravel J."/>
            <person name="Seshadri R."/>
            <person name="DeBoy R.T."/>
            <person name="Ren Q."/>
            <person name="Varga J."/>
            <person name="Awad M.M."/>
            <person name="Brinkac L.M."/>
            <person name="Daugherty S.C."/>
            <person name="Haft D.H."/>
            <person name="Dodson R.J."/>
            <person name="Madupu R."/>
            <person name="Nelson W.C."/>
            <person name="Rosovitz M.J."/>
            <person name="Sullivan S.A."/>
            <person name="Khouri H."/>
            <person name="Dimitrov G.I."/>
            <person name="Watkins K.L."/>
            <person name="Mulligan S."/>
            <person name="Benton J."/>
            <person name="Radune D."/>
            <person name="Fisher D.J."/>
            <person name="Atkins H.S."/>
            <person name="Hiscox T."/>
            <person name="Jost B.H."/>
            <person name="Billington S.J."/>
            <person name="Songer J.G."/>
            <person name="McClane B.A."/>
            <person name="Titball R.W."/>
            <person name="Rood J.I."/>
            <person name="Melville S.B."/>
            <person name="Paulsen I.T."/>
        </authorList>
    </citation>
    <scope>NUCLEOTIDE SEQUENCE [LARGE SCALE GENOMIC DNA]</scope>
    <source>
        <strain>ATCC 13124 / DSM 756 / JCM 1290 / NCIMB 6125 / NCTC 8237 / S 107 / Type A</strain>
    </source>
</reference>
<organism>
    <name type="scientific">Clostridium perfringens (strain ATCC 13124 / DSM 756 / JCM 1290 / NCIMB 6125 / NCTC 8237 / Type A)</name>
    <dbReference type="NCBI Taxonomy" id="195103"/>
    <lineage>
        <taxon>Bacteria</taxon>
        <taxon>Bacillati</taxon>
        <taxon>Bacillota</taxon>
        <taxon>Clostridia</taxon>
        <taxon>Eubacteriales</taxon>
        <taxon>Clostridiaceae</taxon>
        <taxon>Clostridium</taxon>
    </lineage>
</organism>
<gene>
    <name evidence="1" type="primary">selA</name>
    <name type="ordered locus">CPF_2373</name>
</gene>
<protein>
    <recommendedName>
        <fullName evidence="1">L-seryl-tRNA(Sec) selenium transferase</fullName>
        <ecNumber evidence="1">2.9.1.1</ecNumber>
    </recommendedName>
    <alternativeName>
        <fullName evidence="1">Selenocysteine synthase</fullName>
        <shortName evidence="1">Sec synthase</shortName>
    </alternativeName>
    <alternativeName>
        <fullName evidence="1">Selenocysteinyl-tRNA(Sec) synthase</fullName>
    </alternativeName>
</protein>
<dbReference type="EC" id="2.9.1.1" evidence="1"/>
<dbReference type="EMBL" id="CP000246">
    <property type="protein sequence ID" value="ABG83629.1"/>
    <property type="molecule type" value="Genomic_DNA"/>
</dbReference>
<dbReference type="RefSeq" id="WP_003455025.1">
    <property type="nucleotide sequence ID" value="NC_008261.1"/>
</dbReference>
<dbReference type="SMR" id="Q0TNJ4"/>
<dbReference type="STRING" id="195103.CPF_2373"/>
<dbReference type="PaxDb" id="195103-CPF_2373"/>
<dbReference type="KEGG" id="cpf:CPF_2373"/>
<dbReference type="eggNOG" id="COG1921">
    <property type="taxonomic scope" value="Bacteria"/>
</dbReference>
<dbReference type="HOGENOM" id="CLU_038142_1_0_9"/>
<dbReference type="UniPathway" id="UPA00906">
    <property type="reaction ID" value="UER00896"/>
</dbReference>
<dbReference type="Proteomes" id="UP000001823">
    <property type="component" value="Chromosome"/>
</dbReference>
<dbReference type="GO" id="GO:0005737">
    <property type="term" value="C:cytoplasm"/>
    <property type="evidence" value="ECO:0007669"/>
    <property type="project" value="UniProtKB-SubCell"/>
</dbReference>
<dbReference type="GO" id="GO:0004125">
    <property type="term" value="F:L-seryl-tRNA(Sec) selenium transferase activity"/>
    <property type="evidence" value="ECO:0007669"/>
    <property type="project" value="UniProtKB-UniRule"/>
</dbReference>
<dbReference type="GO" id="GO:0001717">
    <property type="term" value="P:conversion of seryl-tRNAsec to selenocys-tRNAsec"/>
    <property type="evidence" value="ECO:0007669"/>
    <property type="project" value="UniProtKB-UniRule"/>
</dbReference>
<dbReference type="GO" id="GO:0001514">
    <property type="term" value="P:selenocysteine incorporation"/>
    <property type="evidence" value="ECO:0007669"/>
    <property type="project" value="UniProtKB-UniRule"/>
</dbReference>
<dbReference type="Gene3D" id="3.90.1150.180">
    <property type="match status" value="1"/>
</dbReference>
<dbReference type="Gene3D" id="3.40.640.10">
    <property type="entry name" value="Type I PLP-dependent aspartate aminotransferase-like (Major domain)"/>
    <property type="match status" value="1"/>
</dbReference>
<dbReference type="HAMAP" id="MF_00423">
    <property type="entry name" value="SelA"/>
    <property type="match status" value="1"/>
</dbReference>
<dbReference type="InterPro" id="IPR015424">
    <property type="entry name" value="PyrdxlP-dep_Trfase"/>
</dbReference>
<dbReference type="InterPro" id="IPR015421">
    <property type="entry name" value="PyrdxlP-dep_Trfase_major"/>
</dbReference>
<dbReference type="InterPro" id="IPR018319">
    <property type="entry name" value="SelA-like"/>
</dbReference>
<dbReference type="InterPro" id="IPR004534">
    <property type="entry name" value="SelA_trans"/>
</dbReference>
<dbReference type="NCBIfam" id="TIGR00474">
    <property type="entry name" value="selA"/>
    <property type="match status" value="1"/>
</dbReference>
<dbReference type="PANTHER" id="PTHR32328">
    <property type="entry name" value="L-SERYL-TRNA(SEC) SELENIUM TRANSFERASE"/>
    <property type="match status" value="1"/>
</dbReference>
<dbReference type="PANTHER" id="PTHR32328:SF0">
    <property type="entry name" value="L-SERYL-TRNA(SEC) SELENIUM TRANSFERASE"/>
    <property type="match status" value="1"/>
</dbReference>
<dbReference type="Pfam" id="PF03841">
    <property type="entry name" value="SelA"/>
    <property type="match status" value="1"/>
</dbReference>
<dbReference type="SUPFAM" id="SSF53383">
    <property type="entry name" value="PLP-dependent transferases"/>
    <property type="match status" value="1"/>
</dbReference>